<feature type="chain" id="PRO_1000100649" description="Cytidylate kinase">
    <location>
        <begin position="1"/>
        <end position="219"/>
    </location>
</feature>
<feature type="binding site" evidence="1">
    <location>
        <begin position="15"/>
        <end position="23"/>
    </location>
    <ligand>
        <name>ATP</name>
        <dbReference type="ChEBI" id="CHEBI:30616"/>
    </ligand>
</feature>
<evidence type="ECO:0000255" key="1">
    <source>
        <dbReference type="HAMAP-Rule" id="MF_00238"/>
    </source>
</evidence>
<proteinExistence type="inferred from homology"/>
<dbReference type="EC" id="2.7.4.25" evidence="1"/>
<dbReference type="EMBL" id="CP000887">
    <property type="protein sequence ID" value="ACD71585.1"/>
    <property type="molecule type" value="Genomic_DNA"/>
</dbReference>
<dbReference type="RefSeq" id="WP_002965273.1">
    <property type="nucleotide sequence ID" value="NC_010742.1"/>
</dbReference>
<dbReference type="SMR" id="B2S7T1"/>
<dbReference type="GeneID" id="93017490"/>
<dbReference type="KEGG" id="bmc:BAbS19_I00230"/>
<dbReference type="HOGENOM" id="CLU_079959_0_1_5"/>
<dbReference type="Proteomes" id="UP000002565">
    <property type="component" value="Chromosome 1"/>
</dbReference>
<dbReference type="GO" id="GO:0005737">
    <property type="term" value="C:cytoplasm"/>
    <property type="evidence" value="ECO:0007669"/>
    <property type="project" value="UniProtKB-SubCell"/>
</dbReference>
<dbReference type="GO" id="GO:0005524">
    <property type="term" value="F:ATP binding"/>
    <property type="evidence" value="ECO:0007669"/>
    <property type="project" value="UniProtKB-UniRule"/>
</dbReference>
<dbReference type="GO" id="GO:0036430">
    <property type="term" value="F:CMP kinase activity"/>
    <property type="evidence" value="ECO:0007669"/>
    <property type="project" value="RHEA"/>
</dbReference>
<dbReference type="GO" id="GO:0036431">
    <property type="term" value="F:dCMP kinase activity"/>
    <property type="evidence" value="ECO:0007669"/>
    <property type="project" value="RHEA"/>
</dbReference>
<dbReference type="GO" id="GO:0006220">
    <property type="term" value="P:pyrimidine nucleotide metabolic process"/>
    <property type="evidence" value="ECO:0007669"/>
    <property type="project" value="UniProtKB-UniRule"/>
</dbReference>
<dbReference type="CDD" id="cd02020">
    <property type="entry name" value="CMPK"/>
    <property type="match status" value="1"/>
</dbReference>
<dbReference type="Gene3D" id="3.40.50.300">
    <property type="entry name" value="P-loop containing nucleotide triphosphate hydrolases"/>
    <property type="match status" value="1"/>
</dbReference>
<dbReference type="HAMAP" id="MF_00238">
    <property type="entry name" value="Cytidyl_kinase_type1"/>
    <property type="match status" value="1"/>
</dbReference>
<dbReference type="InterPro" id="IPR003136">
    <property type="entry name" value="Cytidylate_kin"/>
</dbReference>
<dbReference type="InterPro" id="IPR011994">
    <property type="entry name" value="Cytidylate_kinase_dom"/>
</dbReference>
<dbReference type="InterPro" id="IPR027417">
    <property type="entry name" value="P-loop_NTPase"/>
</dbReference>
<dbReference type="NCBIfam" id="TIGR00017">
    <property type="entry name" value="cmk"/>
    <property type="match status" value="1"/>
</dbReference>
<dbReference type="Pfam" id="PF02224">
    <property type="entry name" value="Cytidylate_kin"/>
    <property type="match status" value="1"/>
</dbReference>
<dbReference type="SUPFAM" id="SSF52540">
    <property type="entry name" value="P-loop containing nucleoside triphosphate hydrolases"/>
    <property type="match status" value="1"/>
</dbReference>
<keyword id="KW-0067">ATP-binding</keyword>
<keyword id="KW-0963">Cytoplasm</keyword>
<keyword id="KW-0418">Kinase</keyword>
<keyword id="KW-0547">Nucleotide-binding</keyword>
<keyword id="KW-0808">Transferase</keyword>
<accession>B2S7T1</accession>
<sequence length="219" mass="23382">MKSFVVAPFIVAIDGPAASGKGTLARRIATHYGMPHLDTGLTYRAVAKALLDKGLPLDDEALATDAALSLDLLAMDKAVLSAHAIGEAASKVAVMPAVRRALVEAQRHFANALPSSVLDGRDIGTVVCPDAAIKLFVTASPEVRARRRFDEVLARGDTADFAEILADLKKRDERDMNRTDSPLRPAEDAHLLDASEMSIEAAFLAAKKLIDHALAQHRG</sequence>
<organism>
    <name type="scientific">Brucella abortus (strain S19)</name>
    <dbReference type="NCBI Taxonomy" id="430066"/>
    <lineage>
        <taxon>Bacteria</taxon>
        <taxon>Pseudomonadati</taxon>
        <taxon>Pseudomonadota</taxon>
        <taxon>Alphaproteobacteria</taxon>
        <taxon>Hyphomicrobiales</taxon>
        <taxon>Brucellaceae</taxon>
        <taxon>Brucella/Ochrobactrum group</taxon>
        <taxon>Brucella</taxon>
    </lineage>
</organism>
<reference key="1">
    <citation type="journal article" date="2008" name="PLoS ONE">
        <title>Genome sequence of Brucella abortus vaccine strain S19 compared to virulent strains yields candidate virulence genes.</title>
        <authorList>
            <person name="Crasta O.R."/>
            <person name="Folkerts O."/>
            <person name="Fei Z."/>
            <person name="Mane S.P."/>
            <person name="Evans C."/>
            <person name="Martino-Catt S."/>
            <person name="Bricker B."/>
            <person name="Yu G."/>
            <person name="Du L."/>
            <person name="Sobral B.W."/>
        </authorList>
    </citation>
    <scope>NUCLEOTIDE SEQUENCE [LARGE SCALE GENOMIC DNA]</scope>
    <source>
        <strain>S19</strain>
    </source>
</reference>
<comment type="catalytic activity">
    <reaction evidence="1">
        <text>CMP + ATP = CDP + ADP</text>
        <dbReference type="Rhea" id="RHEA:11600"/>
        <dbReference type="ChEBI" id="CHEBI:30616"/>
        <dbReference type="ChEBI" id="CHEBI:58069"/>
        <dbReference type="ChEBI" id="CHEBI:60377"/>
        <dbReference type="ChEBI" id="CHEBI:456216"/>
        <dbReference type="EC" id="2.7.4.25"/>
    </reaction>
</comment>
<comment type="catalytic activity">
    <reaction evidence="1">
        <text>dCMP + ATP = dCDP + ADP</text>
        <dbReference type="Rhea" id="RHEA:25094"/>
        <dbReference type="ChEBI" id="CHEBI:30616"/>
        <dbReference type="ChEBI" id="CHEBI:57566"/>
        <dbReference type="ChEBI" id="CHEBI:58593"/>
        <dbReference type="ChEBI" id="CHEBI:456216"/>
        <dbReference type="EC" id="2.7.4.25"/>
    </reaction>
</comment>
<comment type="subcellular location">
    <subcellularLocation>
        <location evidence="1">Cytoplasm</location>
    </subcellularLocation>
</comment>
<comment type="similarity">
    <text evidence="1">Belongs to the cytidylate kinase family. Type 1 subfamily.</text>
</comment>
<protein>
    <recommendedName>
        <fullName evidence="1">Cytidylate kinase</fullName>
        <shortName evidence="1">CK</shortName>
        <ecNumber evidence="1">2.7.4.25</ecNumber>
    </recommendedName>
    <alternativeName>
        <fullName evidence="1">Cytidine monophosphate kinase</fullName>
        <shortName evidence="1">CMP kinase</shortName>
    </alternativeName>
</protein>
<name>KCY_BRUA1</name>
<gene>
    <name evidence="1" type="primary">cmk</name>
    <name type="ordered locus">BAbS19_I00230</name>
</gene>